<feature type="chain" id="PRO_0000383731" description="Cytosolic Fe-S cluster assembly factor NAR1">
    <location>
        <begin position="1"/>
        <end position="597"/>
    </location>
</feature>
<feature type="region of interest" description="Disordered" evidence="3">
    <location>
        <begin position="25"/>
        <end position="46"/>
    </location>
</feature>
<feature type="region of interest" description="Disordered" evidence="3">
    <location>
        <begin position="422"/>
        <end position="448"/>
    </location>
</feature>
<feature type="compositionally biased region" description="Polar residues" evidence="3">
    <location>
        <begin position="432"/>
        <end position="444"/>
    </location>
</feature>
<feature type="binding site" evidence="2">
    <location>
        <position position="20"/>
    </location>
    <ligand>
        <name>[4Fe-4S] cluster</name>
        <dbReference type="ChEBI" id="CHEBI:49883"/>
        <label>1</label>
    </ligand>
</feature>
<feature type="binding site" evidence="2">
    <location>
        <position position="61"/>
    </location>
    <ligand>
        <name>[4Fe-4S] cluster</name>
        <dbReference type="ChEBI" id="CHEBI:49883"/>
        <label>1</label>
    </ligand>
</feature>
<feature type="binding site" evidence="2">
    <location>
        <position position="64"/>
    </location>
    <ligand>
        <name>[4Fe-4S] cluster</name>
        <dbReference type="ChEBI" id="CHEBI:49883"/>
        <label>1</label>
    </ligand>
</feature>
<feature type="binding site" evidence="2">
    <location>
        <position position="67"/>
    </location>
    <ligand>
        <name>[4Fe-4S] cluster</name>
        <dbReference type="ChEBI" id="CHEBI:49883"/>
        <label>1</label>
    </ligand>
</feature>
<feature type="binding site" evidence="2">
    <location>
        <position position="208"/>
    </location>
    <ligand>
        <name>[4Fe-4S] cluster</name>
        <dbReference type="ChEBI" id="CHEBI:49883"/>
        <label>2</label>
    </ligand>
</feature>
<feature type="binding site" evidence="2">
    <location>
        <position position="263"/>
    </location>
    <ligand>
        <name>[4Fe-4S] cluster</name>
        <dbReference type="ChEBI" id="CHEBI:49883"/>
        <label>2</label>
    </ligand>
</feature>
<feature type="binding site" evidence="2">
    <location>
        <position position="464"/>
    </location>
    <ligand>
        <name>[4Fe-4S] cluster</name>
        <dbReference type="ChEBI" id="CHEBI:49883"/>
        <label>2</label>
    </ligand>
</feature>
<feature type="binding site" evidence="2">
    <location>
        <position position="468"/>
    </location>
    <ligand>
        <name>[4Fe-4S] cluster</name>
        <dbReference type="ChEBI" id="CHEBI:49883"/>
        <label>2</label>
    </ligand>
</feature>
<reference key="1">
    <citation type="journal article" date="2008" name="PLoS Genet.">
        <title>Genomic islands in the pathogenic filamentous fungus Aspergillus fumigatus.</title>
        <authorList>
            <person name="Fedorova N.D."/>
            <person name="Khaldi N."/>
            <person name="Joardar V.S."/>
            <person name="Maiti R."/>
            <person name="Amedeo P."/>
            <person name="Anderson M.J."/>
            <person name="Crabtree J."/>
            <person name="Silva J.C."/>
            <person name="Badger J.H."/>
            <person name="Albarraq A."/>
            <person name="Angiuoli S."/>
            <person name="Bussey H."/>
            <person name="Bowyer P."/>
            <person name="Cotty P.J."/>
            <person name="Dyer P.S."/>
            <person name="Egan A."/>
            <person name="Galens K."/>
            <person name="Fraser-Liggett C.M."/>
            <person name="Haas B.J."/>
            <person name="Inman J.M."/>
            <person name="Kent R."/>
            <person name="Lemieux S."/>
            <person name="Malavazi I."/>
            <person name="Orvis J."/>
            <person name="Roemer T."/>
            <person name="Ronning C.M."/>
            <person name="Sundaram J.P."/>
            <person name="Sutton G."/>
            <person name="Turner G."/>
            <person name="Venter J.C."/>
            <person name="White O.R."/>
            <person name="Whitty B.R."/>
            <person name="Youngman P."/>
            <person name="Wolfe K.H."/>
            <person name="Goldman G.H."/>
            <person name="Wortman J.R."/>
            <person name="Jiang B."/>
            <person name="Denning D.W."/>
            <person name="Nierman W.C."/>
        </authorList>
    </citation>
    <scope>NUCLEOTIDE SEQUENCE [LARGE SCALE GENOMIC DNA]</scope>
    <source>
        <strain>ATCC 1020 / DSM 3700 / CBS 544.65 / FGSC A1164 / JCM 1740 / NRRL 181 / WB 181</strain>
    </source>
</reference>
<keyword id="KW-0004">4Fe-4S</keyword>
<keyword id="KW-0408">Iron</keyword>
<keyword id="KW-0411">Iron-sulfur</keyword>
<keyword id="KW-0479">Metal-binding</keyword>
<keyword id="KW-1185">Reference proteome</keyword>
<protein>
    <recommendedName>
        <fullName>Cytosolic Fe-S cluster assembly factor NAR1</fullName>
    </recommendedName>
    <alternativeName>
        <fullName>Nuclear architecture-related protein 1</fullName>
    </alternativeName>
</protein>
<gene>
    <name type="primary">NAR1</name>
    <name type="ORF">NFIA_104280</name>
</gene>
<sequence length="597" mass="64248">MSAILSADDLNDFISPGVACIKPVESLPQKESQSENPYEVTKEDKVQPENLPPAQISLTDCLACSGCVTSAEAVLISLQSHTEVLNTLDLYPELPLDFASDQRGTQNVGSADSDSRIFVASVSPQVRASLAATYGITEREAKYMIDQFLMGPHGLRAGGKHGNGFTWVVDTNVMREAVLALTADEVTNSLLSTGSGSLPKSPILSSACPGWICYAEKTHPFILPHLSRLKSPQALSGTFLKSVLSKALGVSPSQIWHLAIMPCFDKKLEASREELTDIAWASTSAESQTTPVRDVDCVITTRELLTLASARGLSLPNLPLKALPASCSTPFPDQALDSFLFSKSSSDQTVESGTSGGYLHHVLKIFQARNPGSKIVTQRGRNADVVEYVLMSSGDEPLLKAARYYGFRNIQNLVRKLKPARVSRLPGAKPQAVTSSANRRQPMSRNAAPAGTGADYAYVEVMACPGGCTNGGGQIRIEDAREAVPNALKETSTETPVAASKPTPHEQRARLARVDEAYYSADSDSEGSVTTEPVSVLSRDTKIHEFLKYWSEKIDIPLSQLAYTSYREVESDVGKTQNAPNETARVVELAGKIGGGW</sequence>
<proteinExistence type="inferred from homology"/>
<evidence type="ECO:0000250" key="1"/>
<evidence type="ECO:0000255" key="2"/>
<evidence type="ECO:0000256" key="3">
    <source>
        <dbReference type="SAM" id="MobiDB-lite"/>
    </source>
</evidence>
<evidence type="ECO:0000305" key="4"/>
<organism>
    <name type="scientific">Neosartorya fischeri (strain ATCC 1020 / DSM 3700 / CBS 544.65 / FGSC A1164 / JCM 1740 / NRRL 181 / WB 181)</name>
    <name type="common">Aspergillus fischerianus</name>
    <dbReference type="NCBI Taxonomy" id="331117"/>
    <lineage>
        <taxon>Eukaryota</taxon>
        <taxon>Fungi</taxon>
        <taxon>Dikarya</taxon>
        <taxon>Ascomycota</taxon>
        <taxon>Pezizomycotina</taxon>
        <taxon>Eurotiomycetes</taxon>
        <taxon>Eurotiomycetidae</taxon>
        <taxon>Eurotiales</taxon>
        <taxon>Aspergillaceae</taxon>
        <taxon>Aspergillus</taxon>
        <taxon>Aspergillus subgen. Fumigati</taxon>
    </lineage>
</organism>
<name>NAR1_NEOFI</name>
<accession>A1CWD8</accession>
<dbReference type="EMBL" id="DS027685">
    <property type="protein sequence ID" value="EAW24940.1"/>
    <property type="molecule type" value="Genomic_DNA"/>
</dbReference>
<dbReference type="RefSeq" id="XP_001266837.1">
    <property type="nucleotide sequence ID" value="XM_001266836.1"/>
</dbReference>
<dbReference type="SMR" id="A1CWD8"/>
<dbReference type="STRING" id="331117.A1CWD8"/>
<dbReference type="EnsemblFungi" id="EAW24940">
    <property type="protein sequence ID" value="EAW24940"/>
    <property type="gene ID" value="NFIA_104280"/>
</dbReference>
<dbReference type="GeneID" id="4593699"/>
<dbReference type="KEGG" id="nfi:NFIA_104280"/>
<dbReference type="VEuPathDB" id="FungiDB:NFIA_104280"/>
<dbReference type="eggNOG" id="KOG2439">
    <property type="taxonomic scope" value="Eukaryota"/>
</dbReference>
<dbReference type="HOGENOM" id="CLU_018240_0_1_1"/>
<dbReference type="OMA" id="GYLHHVL"/>
<dbReference type="OrthoDB" id="10253113at2759"/>
<dbReference type="Proteomes" id="UP000006702">
    <property type="component" value="Unassembled WGS sequence"/>
</dbReference>
<dbReference type="GO" id="GO:0051539">
    <property type="term" value="F:4 iron, 4 sulfur cluster binding"/>
    <property type="evidence" value="ECO:0007669"/>
    <property type="project" value="UniProtKB-KW"/>
</dbReference>
<dbReference type="GO" id="GO:0051536">
    <property type="term" value="F:iron-sulfur cluster binding"/>
    <property type="evidence" value="ECO:0000250"/>
    <property type="project" value="UniProtKB"/>
</dbReference>
<dbReference type="GO" id="GO:0046872">
    <property type="term" value="F:metal ion binding"/>
    <property type="evidence" value="ECO:0007669"/>
    <property type="project" value="UniProtKB-KW"/>
</dbReference>
<dbReference type="GO" id="GO:0016226">
    <property type="term" value="P:iron-sulfur cluster assembly"/>
    <property type="evidence" value="ECO:0000250"/>
    <property type="project" value="UniProtKB"/>
</dbReference>
<dbReference type="FunFam" id="3.30.70.20:FF:000042">
    <property type="entry name" value="Cytosolic Fe-S cluster assembly factor NAR1"/>
    <property type="match status" value="1"/>
</dbReference>
<dbReference type="FunFam" id="3.40.50.1780:FF:000004">
    <property type="entry name" value="Cytosolic Fe-S cluster assembly factor nar1"/>
    <property type="match status" value="1"/>
</dbReference>
<dbReference type="FunFam" id="3.40.50.1780:FF:000009">
    <property type="entry name" value="Cytosolic Fe-S cluster assembly factor nar1"/>
    <property type="match status" value="1"/>
</dbReference>
<dbReference type="Gene3D" id="3.40.950.10">
    <property type="entry name" value="Fe-only Hydrogenase (Larger Subunit), Chain L, domain 3"/>
    <property type="match status" value="1"/>
</dbReference>
<dbReference type="InterPro" id="IPR050340">
    <property type="entry name" value="Cytosolic_Fe-S_CAF"/>
</dbReference>
<dbReference type="InterPro" id="IPR009016">
    <property type="entry name" value="Fe_hydrogenase"/>
</dbReference>
<dbReference type="InterPro" id="IPR004108">
    <property type="entry name" value="Fe_hydrogenase_lsu_C"/>
</dbReference>
<dbReference type="PANTHER" id="PTHR11615">
    <property type="entry name" value="NITRATE, FORMATE, IRON DEHYDROGENASE"/>
    <property type="match status" value="1"/>
</dbReference>
<dbReference type="Pfam" id="PF02906">
    <property type="entry name" value="Fe_hyd_lg_C"/>
    <property type="match status" value="1"/>
</dbReference>
<dbReference type="SUPFAM" id="SSF53920">
    <property type="entry name" value="Fe-only hydrogenase"/>
    <property type="match status" value="1"/>
</dbReference>
<comment type="function">
    <text evidence="1">Component of the cytosolic Fe/S protein assembly machinery. Required for maturation of extramitochondrial Fe/S proteins. May play a role in the transfer of pre-assembled Fe/S clusters to target apoproteins (By similarity).</text>
</comment>
<comment type="similarity">
    <text evidence="4">Belongs to the NARF family.</text>
</comment>